<proteinExistence type="uncertain"/>
<feature type="chain" id="PRO_0000203361" description="Putative UPF0377 protein YMR324C">
    <location>
        <begin position="1"/>
        <end position="80"/>
    </location>
</feature>
<feature type="transmembrane region" description="Helical" evidence="1">
    <location>
        <begin position="13"/>
        <end position="33"/>
    </location>
</feature>
<gene>
    <name type="ordered locus">YMR324C</name>
    <name type="ORF">YM9924.16C</name>
</gene>
<dbReference type="EMBL" id="Z54141">
    <property type="protein sequence ID" value="CAA90842.1"/>
    <property type="molecule type" value="Genomic_DNA"/>
</dbReference>
<dbReference type="PIR" id="S69882">
    <property type="entry name" value="S69882"/>
</dbReference>
<dbReference type="STRING" id="4932.YMR324C"/>
<dbReference type="PaxDb" id="4932-YMR324C"/>
<dbReference type="EnsemblFungi" id="YMR324C_mRNA">
    <property type="protein sequence ID" value="YMR324C"/>
    <property type="gene ID" value="YMR324C"/>
</dbReference>
<dbReference type="AGR" id="SGD:S000004943"/>
<dbReference type="SGD" id="S000004943">
    <property type="gene designation" value="YMR324C"/>
</dbReference>
<dbReference type="GeneTree" id="ENSGT00940000177730"/>
<dbReference type="HOGENOM" id="CLU_173518_0_0_1"/>
<dbReference type="GO" id="GO:0016020">
    <property type="term" value="C:membrane"/>
    <property type="evidence" value="ECO:0007669"/>
    <property type="project" value="UniProtKB-SubCell"/>
</dbReference>
<organism>
    <name type="scientific">Saccharomyces cerevisiae (strain ATCC 204508 / S288c)</name>
    <name type="common">Baker's yeast</name>
    <dbReference type="NCBI Taxonomy" id="559292"/>
    <lineage>
        <taxon>Eukaryota</taxon>
        <taxon>Fungi</taxon>
        <taxon>Dikarya</taxon>
        <taxon>Ascomycota</taxon>
        <taxon>Saccharomycotina</taxon>
        <taxon>Saccharomycetes</taxon>
        <taxon>Saccharomycetales</taxon>
        <taxon>Saccharomycetaceae</taxon>
        <taxon>Saccharomyces</taxon>
    </lineage>
</organism>
<reference key="1">
    <citation type="journal article" date="1997" name="Nature">
        <title>The nucleotide sequence of Saccharomyces cerevisiae chromosome XIII.</title>
        <authorList>
            <person name="Bowman S."/>
            <person name="Churcher C.M."/>
            <person name="Badcock K."/>
            <person name="Brown D."/>
            <person name="Chillingworth T."/>
            <person name="Connor R."/>
            <person name="Dedman K."/>
            <person name="Devlin K."/>
            <person name="Gentles S."/>
            <person name="Hamlin N."/>
            <person name="Hunt S."/>
            <person name="Jagels K."/>
            <person name="Lye G."/>
            <person name="Moule S."/>
            <person name="Odell C."/>
            <person name="Pearson D."/>
            <person name="Rajandream M.A."/>
            <person name="Rice P."/>
            <person name="Skelton J."/>
            <person name="Walsh S.V."/>
            <person name="Whitehead S."/>
            <person name="Barrell B.G."/>
        </authorList>
    </citation>
    <scope>NUCLEOTIDE SEQUENCE [LARGE SCALE GENOMIC DNA]</scope>
    <source>
        <strain>ATCC 204508 / S288c</strain>
    </source>
</reference>
<reference key="2">
    <citation type="journal article" date="2014" name="G3 (Bethesda)">
        <title>The reference genome sequence of Saccharomyces cerevisiae: Then and now.</title>
        <authorList>
            <person name="Engel S.R."/>
            <person name="Dietrich F.S."/>
            <person name="Fisk D.G."/>
            <person name="Binkley G."/>
            <person name="Balakrishnan R."/>
            <person name="Costanzo M.C."/>
            <person name="Dwight S.S."/>
            <person name="Hitz B.C."/>
            <person name="Karra K."/>
            <person name="Nash R.S."/>
            <person name="Weng S."/>
            <person name="Wong E.D."/>
            <person name="Lloyd P."/>
            <person name="Skrzypek M.S."/>
            <person name="Miyasato S.R."/>
            <person name="Simison M."/>
            <person name="Cherry J.M."/>
        </authorList>
    </citation>
    <scope>GENOME REANNOTATION</scope>
    <source>
        <strain>ATCC 204508 / S288c</strain>
    </source>
</reference>
<name>YM9B_YEAST</name>
<accession>Q04909</accession>
<evidence type="ECO:0000255" key="1"/>
<evidence type="ECO:0000305" key="2"/>
<evidence type="ECO:0000305" key="3">
    <source>
    </source>
</evidence>
<keyword id="KW-0472">Membrane</keyword>
<keyword id="KW-0812">Transmembrane</keyword>
<keyword id="KW-1133">Transmembrane helix</keyword>
<sequence>MITMKMFLFLNEACIFIDSVCEGIVFWGLCLFVCAECENASYRGAEVPYKTLFRSCDTSIFGVAECLNLVAIDPRSEAYC</sequence>
<comment type="subcellular location">
    <subcellularLocation>
        <location evidence="2">Membrane</location>
        <topology evidence="2">Single-pass membrane protein</topology>
    </subcellularLocation>
</comment>
<comment type="similarity">
    <text evidence="2">Belongs to the UPF0377 family.</text>
</comment>
<comment type="caution">
    <text evidence="3">Product of a dubious gene prediction unlikely to encode a functional protein. Because of that it is not part of the S.cerevisiae S288c complete/reference proteome set.</text>
</comment>
<protein>
    <recommendedName>
        <fullName>Putative UPF0377 protein YMR324C</fullName>
    </recommendedName>
</protein>